<keyword id="KW-0963">Cytoplasm</keyword>
<keyword id="KW-0238">DNA-binding</keyword>
<keyword id="KW-0678">Repressor</keyword>
<keyword id="KW-0804">Transcription</keyword>
<keyword id="KW-0805">Transcription regulation</keyword>
<protein>
    <recommendedName>
        <fullName evidence="1">Global transcriptional regulator CodY</fullName>
    </recommendedName>
</protein>
<proteinExistence type="inferred from homology"/>
<organism>
    <name type="scientific">Staphylococcus aureus (strain Mu50 / ATCC 700699)</name>
    <dbReference type="NCBI Taxonomy" id="158878"/>
    <lineage>
        <taxon>Bacteria</taxon>
        <taxon>Bacillati</taxon>
        <taxon>Bacillota</taxon>
        <taxon>Bacilli</taxon>
        <taxon>Bacillales</taxon>
        <taxon>Staphylococcaceae</taxon>
        <taxon>Staphylococcus</taxon>
    </lineage>
</organism>
<dbReference type="EMBL" id="BA000017">
    <property type="protein sequence ID" value="BAB57417.1"/>
    <property type="molecule type" value="Genomic_DNA"/>
</dbReference>
<dbReference type="RefSeq" id="WP_000055337.1">
    <property type="nucleotide sequence ID" value="NC_002758.2"/>
</dbReference>
<dbReference type="SMR" id="P63843"/>
<dbReference type="KEGG" id="sav:SAV1255"/>
<dbReference type="HOGENOM" id="CLU_089581_0_0_9"/>
<dbReference type="PhylomeDB" id="P63843"/>
<dbReference type="Proteomes" id="UP000002481">
    <property type="component" value="Chromosome"/>
</dbReference>
<dbReference type="GO" id="GO:0005737">
    <property type="term" value="C:cytoplasm"/>
    <property type="evidence" value="ECO:0007669"/>
    <property type="project" value="UniProtKB-SubCell"/>
</dbReference>
<dbReference type="GO" id="GO:0003677">
    <property type="term" value="F:DNA binding"/>
    <property type="evidence" value="ECO:0007669"/>
    <property type="project" value="UniProtKB-UniRule"/>
</dbReference>
<dbReference type="GO" id="GO:0003700">
    <property type="term" value="F:DNA-binding transcription factor activity"/>
    <property type="evidence" value="ECO:0007669"/>
    <property type="project" value="InterPro"/>
</dbReference>
<dbReference type="GO" id="GO:0005525">
    <property type="term" value="F:GTP binding"/>
    <property type="evidence" value="ECO:0007669"/>
    <property type="project" value="InterPro"/>
</dbReference>
<dbReference type="GO" id="GO:0045892">
    <property type="term" value="P:negative regulation of DNA-templated transcription"/>
    <property type="evidence" value="ECO:0007669"/>
    <property type="project" value="UniProtKB-UniRule"/>
</dbReference>
<dbReference type="FunFam" id="1.10.10.10:FF:000034">
    <property type="entry name" value="GTP-sensing transcriptional pleiotropic repressor CodY"/>
    <property type="match status" value="1"/>
</dbReference>
<dbReference type="FunFam" id="3.30.450.40:FF:000003">
    <property type="entry name" value="GTP-sensing transcriptional pleiotropic repressor CodY"/>
    <property type="match status" value="1"/>
</dbReference>
<dbReference type="Gene3D" id="3.30.450.40">
    <property type="match status" value="1"/>
</dbReference>
<dbReference type="Gene3D" id="1.10.10.10">
    <property type="entry name" value="Winged helix-like DNA-binding domain superfamily/Winged helix DNA-binding domain"/>
    <property type="match status" value="1"/>
</dbReference>
<dbReference type="HAMAP" id="MF_00621">
    <property type="entry name" value="HTH_type_CodY"/>
    <property type="match status" value="1"/>
</dbReference>
<dbReference type="InterPro" id="IPR014154">
    <property type="entry name" value="CodY"/>
</dbReference>
<dbReference type="InterPro" id="IPR029016">
    <property type="entry name" value="GAF-like_dom_sf"/>
</dbReference>
<dbReference type="InterPro" id="IPR013198">
    <property type="entry name" value="GTP_trans_reg_CodY_C"/>
</dbReference>
<dbReference type="InterPro" id="IPR010312">
    <property type="entry name" value="Transc_reg_CodY_N"/>
</dbReference>
<dbReference type="InterPro" id="IPR036388">
    <property type="entry name" value="WH-like_DNA-bd_sf"/>
</dbReference>
<dbReference type="InterPro" id="IPR036390">
    <property type="entry name" value="WH_DNA-bd_sf"/>
</dbReference>
<dbReference type="NCBIfam" id="TIGR02787">
    <property type="entry name" value="codY_Gpos"/>
    <property type="match status" value="1"/>
</dbReference>
<dbReference type="NCBIfam" id="NF003170">
    <property type="entry name" value="PRK04158.1"/>
    <property type="match status" value="1"/>
</dbReference>
<dbReference type="PANTHER" id="PTHR40062:SF1">
    <property type="entry name" value="GLOBAL TRANSCRIPTIONAL REGULATOR CODY"/>
    <property type="match status" value="1"/>
</dbReference>
<dbReference type="PANTHER" id="PTHR40062">
    <property type="entry name" value="GTP-SENSING TRANSCRIPTIONAL PLEIOTROPIC REPRESSOR CODY"/>
    <property type="match status" value="1"/>
</dbReference>
<dbReference type="Pfam" id="PF06018">
    <property type="entry name" value="CodY"/>
    <property type="match status" value="1"/>
</dbReference>
<dbReference type="Pfam" id="PF08222">
    <property type="entry name" value="HTH_CodY"/>
    <property type="match status" value="1"/>
</dbReference>
<dbReference type="PIRSF" id="PIRSF011572">
    <property type="entry name" value="GTP_sensing_CodY"/>
    <property type="match status" value="1"/>
</dbReference>
<dbReference type="SUPFAM" id="SSF46785">
    <property type="entry name" value="Winged helix' DNA-binding domain"/>
    <property type="match status" value="1"/>
</dbReference>
<reference key="1">
    <citation type="journal article" date="2001" name="Lancet">
        <title>Whole genome sequencing of meticillin-resistant Staphylococcus aureus.</title>
        <authorList>
            <person name="Kuroda M."/>
            <person name="Ohta T."/>
            <person name="Uchiyama I."/>
            <person name="Baba T."/>
            <person name="Yuzawa H."/>
            <person name="Kobayashi I."/>
            <person name="Cui L."/>
            <person name="Oguchi A."/>
            <person name="Aoki K."/>
            <person name="Nagai Y."/>
            <person name="Lian J.-Q."/>
            <person name="Ito T."/>
            <person name="Kanamori M."/>
            <person name="Matsumaru H."/>
            <person name="Maruyama A."/>
            <person name="Murakami H."/>
            <person name="Hosoyama A."/>
            <person name="Mizutani-Ui Y."/>
            <person name="Takahashi N.K."/>
            <person name="Sawano T."/>
            <person name="Inoue R."/>
            <person name="Kaito C."/>
            <person name="Sekimizu K."/>
            <person name="Hirakawa H."/>
            <person name="Kuhara S."/>
            <person name="Goto S."/>
            <person name="Yabuzaki J."/>
            <person name="Kanehisa M."/>
            <person name="Yamashita A."/>
            <person name="Oshima K."/>
            <person name="Furuya K."/>
            <person name="Yoshino C."/>
            <person name="Shiba T."/>
            <person name="Hattori M."/>
            <person name="Ogasawara N."/>
            <person name="Hayashi H."/>
            <person name="Hiramatsu K."/>
        </authorList>
    </citation>
    <scope>NUCLEOTIDE SEQUENCE [LARGE SCALE GENOMIC DNA]</scope>
    <source>
        <strain>Mu50 / ATCC 700699</strain>
    </source>
</reference>
<gene>
    <name evidence="1" type="primary">codY</name>
    <name type="ordered locus">SAV1255</name>
</gene>
<accession>P63843</accession>
<accession>Q99UL6</accession>
<comment type="function">
    <text evidence="1">DNA-binding global transcriptional regulator which is involved in the adaptive response to starvation and acts by directly or indirectly controlling the expression of numerous genes in response to nutrient availability. During rapid exponential growth, CodY is highly active and represses genes whose products allow adaptation to nutrient depletion.</text>
</comment>
<comment type="subcellular location">
    <subcellularLocation>
        <location evidence="1">Cytoplasm</location>
    </subcellularLocation>
</comment>
<comment type="similarity">
    <text evidence="1">Belongs to the CodY family.</text>
</comment>
<sequence>MSLLSKTRELNTLLQKHKGIAVDFKDVAQTISSVTVTNVFIVSRRGKILGSSLNELLKSQRIIQMLEERHIPSEYTERLMEVKQTESNIDIDNVLTVFPPENRELFIDSRTTIFPILGGGERLGTLVLGRVHDDFNENDLVLGEYAATVIGMEILREKHSEVEKEARDKAAITMAINSLSYSEKEAIEHIFEELGGTEGLLIASKVADRVGITRSVIVNALRKLESAGVIESRSLGMKGTFIKVKKEKFLDELEKSK</sequence>
<feature type="chain" id="PRO_0000213232" description="Global transcriptional regulator CodY">
    <location>
        <begin position="1"/>
        <end position="257"/>
    </location>
</feature>
<feature type="DNA-binding region" description="H-T-H motif" evidence="1">
    <location>
        <begin position="203"/>
        <end position="222"/>
    </location>
</feature>
<feature type="region of interest" description="GAF domain" evidence="1">
    <location>
        <begin position="1"/>
        <end position="155"/>
    </location>
</feature>
<name>CODY_STAAM</name>
<evidence type="ECO:0000255" key="1">
    <source>
        <dbReference type="HAMAP-Rule" id="MF_00621"/>
    </source>
</evidence>